<organismHost>
    <name type="scientific">Homo sapiens</name>
    <name type="common">Human</name>
    <dbReference type="NCBI Taxonomy" id="9606"/>
</organismHost>
<comment type="function">
    <molecule>Gag-Pol polyprotein</molecule>
    <text evidence="1">Mediates, with Gag polyprotein, the essential events in virion assembly, including binding the plasma membrane, making the protein-protein interactions necessary to create spherical particles, recruiting the viral Env proteins, and packaging the genomic RNA via direct interactions with the RNA packaging sequence (Psi). Gag-Pol polyprotein may regulate its own translation, by the binding genomic RNA in the 5'-UTR. At low concentration, the polyprotein would promote translation, whereas at high concentration, the polyprotein would encapsidate genomic RNA and then shut off translation.</text>
</comment>
<comment type="function">
    <molecule>Matrix protein p17</molecule>
    <text evidence="7">Targets the polyprotein to the plasma membrane via a multipartite membrane-binding signal, that includes its myristoylated N-terminus. Matrix protein is part of the pre-integration complex. Implicated in the release from host cell mediated by Vpu. Binds to RNA.</text>
</comment>
<comment type="function">
    <molecule>Capsid protein p24</molecule>
    <text evidence="5 7">Forms the conical core that encapsulates the genomic RNA-nucleocapsid complex in the virion. Most core are conical, with only 7% tubular. The core is constituted by capsid protein hexamer subunits. The core is disassembled soon after virion entry (By similarity). Host restriction factors such as TRIM5-alpha or TRIMCyp bind retroviral capsids and cause premature capsid disassembly, leading to blocks in reverse transcription. Capsid restriction by TRIM5 is one of the factors which restricts HIV-1 to the human species. Host PIN1 apparently facilitates the virion uncoating. On the other hand, interactions with PDZD8 or CYPA stabilize the capsid.</text>
</comment>
<comment type="function">
    <molecule>Nucleocapsid protein p7</molecule>
    <text evidence="5">Encapsulates and protects viral dimeric unspliced genomic RNA (gRNA). Binds these RNAs through its zinc fingers. Acts as a nucleic acid chaperone which is involved in rearangement of nucleic acid secondary structure during gRNA retrotranscription. Also facilitates template switch leading to recombination. As part of the polyprotein, participates in gRNA dimerization, packaging, tRNA incorporation and virion assembly.</text>
</comment>
<comment type="function">
    <molecule>Protease</molecule>
    <text evidence="5 10">Aspartyl protease that mediates proteolytic cleavages of Gag and Gag-Pol polyproteins during or shortly after the release of the virion from the plasma membrane. Cleavages take place as an ordered, step-wise cascade to yield mature proteins. This process is called maturation. Displays maximal activity during the budding process just prior to particle release from the cell. Also cleaves Nef and Vif, probably concomitantly with viral structural proteins on maturation of virus particles. Hydrolyzes host EIF4GI and PABP1 in order to shut off the capped cellular mRNA translation. The resulting inhibition of cellular protein synthesis serves to ensure maximal viral gene expression and to evade host immune response. Also mediates cleavage of host YTHDF3. Mediates cleavage of host CARD8, thereby activating the CARD8 inflammasome, leading to the clearance of latent HIV-1 in patient CD4(+) T-cells after viral reactivation; in contrast, HIV-1 can evade CARD8-sensing when its protease remains inactive in infected cells prior to viral budding (By similarity).</text>
</comment>
<comment type="function">
    <molecule>Reverse transcriptase/ribonuclease H</molecule>
    <text evidence="5">Multifunctional enzyme that converts the viral RNA genome into dsDNA in the cytoplasm, shortly after virus entry into the cell. This enzyme displays a DNA polymerase activity that can copy either DNA or RNA templates, and a ribonuclease H (RNase H) activity that cleaves the RNA strand of RNA-DNA heteroduplexes in a partially processive 3' to 5' endonucleasic mode. Conversion of viral genomic RNA into dsDNA requires many steps. A tRNA(3)-Lys binds to the primer-binding site (PBS) situated at the 5'-end of the viral RNA. RT uses the 3' end of the tRNA primer to perform a short round of RNA-dependent minus-strand DNA synthesis. The reading proceeds through the U5 region and ends after the repeated (R) region which is present at both ends of viral RNA. The portion of the RNA-DNA heteroduplex is digested by the RNase H, resulting in a ssDNA product attached to the tRNA primer. This ssDNA/tRNA hybridizes with the identical R region situated at the 3' end of viral RNA. This template exchange, known as minus-strand DNA strong stop transfer, can be either intra- or intermolecular. RT uses the 3' end of this newly synthesized short ssDNA to perform the RNA-dependent minus-strand DNA synthesis of the whole template. RNase H digests the RNA template except for two polypurine tracts (PPTs) situated at the 5'-end and near the center of the genome. It is not clear if both polymerase and RNase H activities are simultaneous. RNase H probably can proceed both in a polymerase-dependent (RNA cut into small fragments by the same RT performing DNA synthesis) and a polymerase-independent mode (cleavage of remaining RNA fragments by free RTs). Secondly, RT performs DNA-directed plus-strand DNA synthesis using the PPTs that have not been removed by RNase H as primers. PPTs and tRNA primers are then removed by RNase H. The 3' and 5' ssDNA PBS regions hybridize to form a circular dsDNA intermediate. Strand displacement synthesis by RT to the PBS and PPT ends produces a blunt ended, linear dsDNA copy of the viral genome that includes long terminal repeats (LTRs) at both ends.</text>
</comment>
<comment type="function">
    <molecule>Integrase</molecule>
    <text evidence="5">Catalyzes viral DNA integration into the host chromosome, by performing a series of DNA cutting and joining reactions. This enzyme activity takes place after virion entry into a cell and reverse transcription of the RNA genome in dsDNA. The first step in the integration process is 3' processing. This step requires a complex comprising the viral genome, matrix protein, Vpr and integrase. This complex is called the pre-integration complex (PIC). The integrase protein removes 2 nucleotides from each 3' end of the viral DNA, leaving recessed CA OH's at the 3' ends. In the second step, the PIC enters cell nucleus. This process is mediated through integrase and Vpr proteins, and allows the virus to infect a non dividing cell. This ability to enter the nucleus is specific of lentiviruses, other retroviruses cannot and rely on cell division to access cell chromosomes. In the third step, termed strand transfer, the integrase protein joins the previously processed 3' ends to the 5' ends of strands of target cellular DNA at the site of integration. The 5'-ends are produced by integrase-catalyzed staggered cuts, 5 bp apart. A Y-shaped, gapped, recombination intermediate results, with the 5'-ends of the viral DNA strands and the 3' ends of target DNA strands remaining unjoined, flanking a gap of 5 bp. The last step is viral DNA integration into host chromosome. This involves host DNA repair synthesis in which the 5 bp gaps between the unjoined strands are filled in and then ligated. Since this process occurs at both cuts flanking the HIV genome, a 5 bp duplication of host DNA is produced at the ends of HIV-1 integration. Alternatively, Integrase may catalyze the excision of viral DNA just after strand transfer, this is termed disintegration.</text>
</comment>
<comment type="catalytic activity">
    <reaction evidence="10">
        <text>Specific for a P1 residue that is hydrophobic, and P1' variable, but often Pro.</text>
        <dbReference type="EC" id="3.4.23.16"/>
    </reaction>
</comment>
<comment type="catalytic activity">
    <reaction evidence="1">
        <text>Endohydrolysis of RNA in RNA/DNA hybrids. Three different cleavage modes: 1. sequence-specific internal cleavage of RNA. Human immunodeficiency virus type 1 and Moloney murine leukemia virus enzymes prefer to cleave the RNA strand one nucleotide away from the RNA-DNA junction. 2. RNA 5'-end directed cleavage 13-19 nucleotides from the RNA end. 3. DNA 3'-end directed cleavage 15-20 nucleotides away from the primer terminus.</text>
        <dbReference type="EC" id="3.1.26.13"/>
    </reaction>
</comment>
<comment type="catalytic activity">
    <reaction evidence="1">
        <text>3'-end directed exonucleolytic cleavage of viral RNA-DNA hybrid.</text>
        <dbReference type="EC" id="3.1.13.2"/>
    </reaction>
</comment>
<comment type="catalytic activity">
    <reaction evidence="11">
        <text>DNA(n) + a 2'-deoxyribonucleoside 5'-triphosphate = DNA(n+1) + diphosphate</text>
        <dbReference type="Rhea" id="RHEA:22508"/>
        <dbReference type="Rhea" id="RHEA-COMP:17339"/>
        <dbReference type="Rhea" id="RHEA-COMP:17340"/>
        <dbReference type="ChEBI" id="CHEBI:33019"/>
        <dbReference type="ChEBI" id="CHEBI:61560"/>
        <dbReference type="ChEBI" id="CHEBI:173112"/>
        <dbReference type="EC" id="2.7.7.49"/>
    </reaction>
</comment>
<comment type="catalytic activity">
    <reaction evidence="11">
        <text>DNA(n) + a 2'-deoxyribonucleoside 5'-triphosphate = DNA(n+1) + diphosphate</text>
        <dbReference type="Rhea" id="RHEA:22508"/>
        <dbReference type="Rhea" id="RHEA-COMP:17339"/>
        <dbReference type="Rhea" id="RHEA-COMP:17340"/>
        <dbReference type="ChEBI" id="CHEBI:33019"/>
        <dbReference type="ChEBI" id="CHEBI:61560"/>
        <dbReference type="ChEBI" id="CHEBI:173112"/>
        <dbReference type="EC" id="2.7.7.7"/>
    </reaction>
</comment>
<comment type="cofactor">
    <cofactor evidence="1">
        <name>Mg(2+)</name>
        <dbReference type="ChEBI" id="CHEBI:18420"/>
    </cofactor>
    <text evidence="1">Binds 2 magnesium ions for reverse transcriptase polymerase activity.</text>
</comment>
<comment type="cofactor">
    <cofactor evidence="1">
        <name>Mg(2+)</name>
        <dbReference type="ChEBI" id="CHEBI:18420"/>
    </cofactor>
    <text evidence="1">Binds 2 magnesium ions for ribonuclease H (RNase H) activity. Substrate-binding is a precondition for magnesium binding.</text>
</comment>
<comment type="cofactor">
    <cofactor evidence="1">
        <name>Mg(2+)</name>
        <dbReference type="ChEBI" id="CHEBI:18420"/>
    </cofactor>
    <text evidence="1">Magnesium ions are required for integrase activity. Binds at least 1, maybe 2 magnesium ions.</text>
</comment>
<comment type="activity regulation">
    <text evidence="1">Protease: The viral protease is inhibited by many synthetic protease inhibitors (PIs), such as amprenavir, atazanavir, indinavir, loprinavir, nelfinavir, ritonavir and saquinavir. Use of protease inhibitors in tritherapy regimens permit more ambitious therapeutic strategies. Reverse transcriptase/ribonuclease H: RT can be inhibited either by nucleoside RT inhibitors (NRTIs) or by non nucleoside RT inhibitors (NNRTIs). NRTIs act as chain terminators, whereas NNRTIs inhibit DNA polymerization by binding a small hydrophobic pocket near the RT active site and inducing an allosteric change in this region. Classical NRTIs are abacavir, adefovir (PMEA), didanosine (ddI), lamivudine (3TC), stavudine (d4T), tenofovir (PMPA), zalcitabine (ddC), and zidovudine (AZT). Classical NNRTIs are atevirdine (BHAP U-87201E), delavirdine, efavirenz (DMP-266), emivirine (I-EBU), and nevirapine (BI-RG-587). The tritherapies used as a basic effective treatment of AIDS associate two NRTIs and one NNRTI.</text>
</comment>
<comment type="subunit">
    <molecule>Matrix protein p17</molecule>
    <text evidence="5 7">Homotrimer; further assembles as hexamers of trimers (By similarity). Interacts with gp41 (via C-terminus) (By similarity). Interacts with host CALM1; this interaction induces a conformational change in the Matrix protein, triggering exposure of the myristate group (By similarity). Interacts with host AP3D1; this interaction allows the polyprotein trafficking to multivesicular bodies during virus assembly (By similarity). Part of the pre-integration complex (PIC) which is composed of viral genome, matrix protein, Vpr and integrase (By similarity).</text>
</comment>
<comment type="subunit">
    <molecule>Capsid protein p24</molecule>
    <text evidence="5 7">Homodimer; the homodimer further multimerizes as homohexamers or homopentamers. Interacts with human PPIA/CYPA (By similarity); This interaction stabilizes the capsid. Interacts with human NUP153 (By similarity). Interacts with host PDZD8; this interaction stabilizes the capsid (By similarity). Interacts with monkey TRIM5; this interaction destabilizes the capsid (By similarity).</text>
</comment>
<comment type="subunit">
    <molecule>Protease</molecule>
    <text evidence="5 7">Homodimer, whose active site consists of two apposed aspartic acid residues.</text>
</comment>
<comment type="subunit">
    <molecule>Reverse transcriptase/ribonuclease H</molecule>
    <text evidence="3">Heterodimer of p66 RT and p51 RT (RT p66/p51) (By similarity). Heterodimerization of RT is essential for DNA polymerase activity (By similarity). The overall folding of the subdomains is similar in p66 RT and p51 RT but the spatial arrangements of the subdomains are dramatically different (By similarity).</text>
</comment>
<comment type="subunit">
    <molecule>Integrase</molecule>
    <text evidence="4 5 7">Homotetramer; may further associate as a homohexadecamer (By similarity). Part of the pre-integration complex (PIC) which is composed of viral genome, matrix protein, Vpr and integrase. Interacts with human SMARCB1/INI1 and human PSIP1/LEDGF isoform 1. Interacts with human KPNA3; this interaction might play a role in nuclear import of the pre-integration complex (By similarity). Interacts with human NUP153; this interaction might play a role in nuclear import of the pre-integration complex (By similarity).</text>
</comment>
<comment type="subcellular location">
    <molecule>Gag-Pol polyprotein</molecule>
    <subcellularLocation>
        <location>Host cell membrane</location>
        <topology>Lipid-anchor</topology>
    </subcellularLocation>
    <subcellularLocation>
        <location>Host endosome</location>
        <location>Host multivesicular body</location>
    </subcellularLocation>
    <text evidence="7">These locations are linked to virus assembly sites. The main location is the cell membrane, but under some circumstances, late endosomal compartments can serve as productive sites for virion assembly.</text>
</comment>
<comment type="subcellular location">
    <molecule>Matrix protein p17</molecule>
    <subcellularLocation>
        <location>Virion membrane</location>
        <topology evidence="18">Lipid-anchor</topology>
    </subcellularLocation>
    <subcellularLocation>
        <location evidence="1">Host nucleus</location>
    </subcellularLocation>
    <subcellularLocation>
        <location evidence="1">Host cytoplasm</location>
    </subcellularLocation>
</comment>
<comment type="subcellular location">
    <molecule>Capsid protein p24</molecule>
    <subcellularLocation>
        <location evidence="18">Virion</location>
    </subcellularLocation>
</comment>
<comment type="subcellular location">
    <molecule>Nucleocapsid protein p7</molecule>
    <subcellularLocation>
        <location evidence="18">Virion</location>
    </subcellularLocation>
</comment>
<comment type="subcellular location">
    <molecule>Reverse transcriptase/ribonuclease H</molecule>
    <subcellularLocation>
        <location evidence="18">Virion</location>
    </subcellularLocation>
</comment>
<comment type="subcellular location">
    <molecule>Integrase</molecule>
    <subcellularLocation>
        <location evidence="18">Virion</location>
    </subcellularLocation>
    <subcellularLocation>
        <location evidence="18">Host nucleus</location>
    </subcellularLocation>
    <subcellularLocation>
        <location evidence="18">Host cytoplasm</location>
    </subcellularLocation>
    <text evidence="18">Nuclear at initial phase, cytoplasmic at assembly.</text>
</comment>
<comment type="alternative products">
    <event type="ribosomal frameshifting"/>
    <isoform>
        <id>Q9QBZ9-1</id>
        <name>Gag-Pol polyprotein</name>
        <sequence type="displayed"/>
    </isoform>
    <isoform>
        <id>Q9QC00-1</id>
        <name>Gag polyprotein</name>
        <sequence type="external"/>
    </isoform>
    <text>Translation results in the formation of the Gag polyprotein most of the time. Ribosomal frameshifting at the gag-pol genes boundary occurs at low frequency and produces the Gag-Pol polyprotein. This strategy of translation probably allows the virus to modulate the quantity of each viral protein. Maintenance of a correct Gag to Gag-Pol ratio is essential for RNA dimerization and viral infectivity.</text>
</comment>
<comment type="domain">
    <molecule>Reverse transcriptase/ribonuclease H</molecule>
    <text evidence="1">RT is structured in five subdomains: finger, palm, thumb, connection and RNase H. Within the palm subdomain, the 'primer grip' region is thought to be involved in the positioning of the primer terminus for accommodating the incoming nucleotide. The RNase H domain stabilizes the association of RT with primer-template.</text>
</comment>
<comment type="domain">
    <molecule>Reverse transcriptase/ribonuclease H</molecule>
    <text evidence="1">The tryptophan repeat motif is involved in RT p66/p51 dimerization (By similarity).</text>
</comment>
<comment type="domain">
    <molecule>Integrase</molecule>
    <text evidence="1">The core domain contains the D-x(n)-D-x(35)-E motif, named for the phylogenetically conserved glutamic acid and aspartic acid residues and the invariant 35 amino acid spacing between the second and third acidic residues. Each acidic residue of the D,D(35)E motif is independently essential for the 3'-processing and strand transfer activities of purified integrase protein.</text>
</comment>
<comment type="PTM">
    <molecule>Gag-Pol polyprotein</molecule>
    <text evidence="5 11">Specific enzymatic cleavages by the viral protease yield mature proteins. The protease is released by autocatalytic cleavage. The polyprotein is cleaved during and after budding, this process is termed maturation. Proteolytic cleavage of p66 RT removes the RNase H domain to yield the p51 RT subunit. Nucleocapsid protein p7 might be further cleaved after virus entry.</text>
</comment>
<comment type="PTM">
    <molecule>Matrix protein p17</molecule>
    <text evidence="5">Tyrosine phosphorylated presumably in the virion by a host kinase. Phosphorylation is apparently not a major regulator of membrane association.</text>
</comment>
<comment type="PTM">
    <molecule>Capsid protein p24</molecule>
    <text evidence="6">Phosphorylated possibly by host MAPK1; this phosphorylation is necessary for Pin1-mediated virion uncoating.</text>
</comment>
<comment type="PTM">
    <molecule>Nucleocapsid protein p7</molecule>
    <text evidence="2">Methylated by host PRMT6, impairing its function by reducing RNA annealing and the initiation of reverse transcription.</text>
</comment>
<comment type="miscellaneous">
    <molecule>Reverse transcriptase/ribonuclease H</molecule>
    <text evidence="1">Error-prone enzyme that lacks a proof-reading function. High mutations rate is a direct consequence of this characteristic. RT also displays frequent template switching leading to high recombination rate. Recombination mostly occurs between homologous regions of the two copackaged RNA genomes. If these two RNA molecules derive from different viral strains, reverse transcription will give rise to highly recombinated proviral DNAs.</text>
</comment>
<comment type="miscellaneous">
    <text>HIV-1 lineages are divided in three main groups, M (for Major), O (for Outlier), and N (for New, or Non-M, Non-O). The vast majority of strains found worldwide belong to the group M. Group O seems to be endemic to and largely confined to Cameroon and neighboring countries in West Central Africa, where these viruses represent a small minority of HIV-1 strains. The group N is represented by a limited number of isolates from Cameroonian persons. The group M is further subdivided in 9 clades or subtypes (A to D, F to H, J and K).</text>
</comment>
<comment type="miscellaneous">
    <text>Resistance to inhibitors associated with mutations are observed both in viral protease and in reverse transcriptase. Most of the time, single mutations confer only a modest reduction in drug susceptibility. Combination of several mutations is usually required to develop a high-level drug resistance. These mutations are predominantly found in clade B viruses and not in other genotypes. They are listed in the clade B representative isolate HXB2 (AC P04585).</text>
</comment>
<comment type="miscellaneous">
    <molecule>Isoform Gag-Pol polyprotein</molecule>
    <text>Produced by -1 ribosomal frameshifting.</text>
</comment>
<comment type="sequence caution" evidence="18">
    <conflict type="frameshift">
        <sequence resource="EMBL-CDS" id="CAB59007"/>
    </conflict>
</comment>
<comment type="sequence caution" evidence="18">
    <conflict type="frameshift">
        <sequence resource="EMBL-CDS" id="CAB59008"/>
    </conflict>
</comment>
<comment type="online information" name="HIV drug resistance mutations">
    <link uri="https://www.iasusa.org/hiv-drug-resistance/hiv-drug-resistance-mutations/"/>
</comment>
<comment type="online information" name="hivdb">
    <link uri="https://hivdb.stanford.edu"/>
    <text>HIV drug resistance database</text>
</comment>
<keyword id="KW-1073">Activation of host caspases by virus</keyword>
<keyword id="KW-0014">AIDS</keyword>
<keyword id="KW-0064">Aspartyl protease</keyword>
<keyword id="KW-0167">Capsid protein</keyword>
<keyword id="KW-0229">DNA integration</keyword>
<keyword id="KW-0233">DNA recombination</keyword>
<keyword id="KW-0238">DNA-binding</keyword>
<keyword id="KW-0239">DNA-directed DNA polymerase</keyword>
<keyword id="KW-0255">Endonuclease</keyword>
<keyword id="KW-1262">Eukaryotic host gene expression shutoff by virus</keyword>
<keyword id="KW-1193">Eukaryotic host translation shutoff by virus</keyword>
<keyword id="KW-1032">Host cell membrane</keyword>
<keyword id="KW-1035">Host cytoplasm</keyword>
<keyword id="KW-1039">Host endosome</keyword>
<keyword id="KW-1190">Host gene expression shutoff by virus</keyword>
<keyword id="KW-1043">Host membrane</keyword>
<keyword id="KW-1048">Host nucleus</keyword>
<keyword id="KW-0945">Host-virus interaction</keyword>
<keyword id="KW-0378">Hydrolase</keyword>
<keyword id="KW-0446">Lipid-binding</keyword>
<keyword id="KW-0449">Lipoprotein</keyword>
<keyword id="KW-0460">Magnesium</keyword>
<keyword id="KW-0472">Membrane</keyword>
<keyword id="KW-0479">Metal-binding</keyword>
<keyword id="KW-1119">Modulation of host cell apoptosis by virus</keyword>
<keyword id="KW-0511">Multifunctional enzyme</keyword>
<keyword id="KW-0519">Myristate</keyword>
<keyword id="KW-0540">Nuclease</keyword>
<keyword id="KW-0548">Nucleotidyltransferase</keyword>
<keyword id="KW-0597">Phosphoprotein</keyword>
<keyword id="KW-0645">Protease</keyword>
<keyword id="KW-0677">Repeat</keyword>
<keyword id="KW-0688">Ribosomal frameshifting</keyword>
<keyword id="KW-0694">RNA-binding</keyword>
<keyword id="KW-0695">RNA-directed DNA polymerase</keyword>
<keyword id="KW-0808">Transferase</keyword>
<keyword id="KW-1179">Viral genome integration</keyword>
<keyword id="KW-0543">Viral nucleoprotein</keyword>
<keyword id="KW-1163">Viral penetration into host nucleus</keyword>
<keyword id="KW-1188">Viral release from host cell</keyword>
<keyword id="KW-0946">Virion</keyword>
<keyword id="KW-0917">Virion maturation</keyword>
<keyword id="KW-1160">Virus entry into host cell</keyword>
<keyword id="KW-0862">Zinc</keyword>
<keyword id="KW-0863">Zinc-finger</keyword>
<organism>
    <name type="scientific">Human immunodeficiency virus type 1 group M subtype K (isolate 97ZR-EQTB11)</name>
    <name type="common">HIV-1</name>
    <dbReference type="NCBI Taxonomy" id="388907"/>
    <lineage>
        <taxon>Viruses</taxon>
        <taxon>Riboviria</taxon>
        <taxon>Pararnavirae</taxon>
        <taxon>Artverviricota</taxon>
        <taxon>Revtraviricetes</taxon>
        <taxon>Ortervirales</taxon>
        <taxon>Retroviridae</taxon>
        <taxon>Orthoretrovirinae</taxon>
        <taxon>Lentivirus</taxon>
        <taxon>Human immunodeficiency virus type 1</taxon>
    </lineage>
</organism>
<sequence length="1429" mass="161685">MGARASVLSGGKLDKWEKIQLRPGGKKKYRLKHLVWASRELERFALNPNLLETVEGCRQIIRQLQPSLQTGSEELRSLFNTVATLYWVHQSIQVRDTKEALDKLEEEQNRTQQKTQQGKADKGVSQNYPIVQNLQGQMVHQALSPRTLNAWVKVIEEKAFSPEVIPMFSALSEGATPQDLNTMLNTVGGHQAAMQMLKDTINEEAAEWDRMHPVQAGPIPPGQIREPRGSDIAGTTSTLQEQITWMTSNPPIPVGEIYKRWIILGLNKIVRMYSPVSILDIRQGPKEPFRDYVDRFFRVLRAEQATQEVKNWMTETLLVQNANPDCRTILKALGSGATLEEMMTACQGVGGPGHKARVLAEAMSQVTNSAVMMQRGNFKGQRRIIKCFNCGKEGHLARNCRAPRKKGCWKCGKEGHQMKDCSERQANFFREVLASQQREARKFSSEQTRANSPTSRELWVRGEDNPLSETGNERSGTGSSFNFPQITLWQRPVVTVKVGGQLREALLDTGADDTVLEEINLPGKWKPKMIGGIGGFIKVRQYDQVCMEICGQKAIGTVLVGPTPVNIIGRNMLTQIGCTLNFPISPIETVPVKLKPGMDGPKVKQWPLTEEKIKALVEICTEMEKEGKISKIGPENPYNTPVFAIKKKDSTKWIKLVDFRELNKRTPDFWEVQLGIPHPAGLKKKKSVTVLDVGDAYFSVPLDKDFRKYTAFTIPSINNETPGIRYQYNVLPQGWKGSPAIFQCSMTKILEPFRRKNPDMVLYQYMDDLYVGSDLEIGQHRAKIEELREHLLRWGFTTPDKKHQKEPPFLWMGYELHPDKWTVQPIQLPDKDSWTVNDIQKLVGKLNWASQIFPGIKVKQLCKLLRGVKALTDIVPLTAEAELELAENREILKEPVHGVYYDPSKDLIAEIQKQGHGQWTYQIYQEPYKNLKTGKYARIRSAHTNDVKQLTEVVQKVAMESIVIWGKTPKFRLPIQKETWGTWWTEYWQATWIPEWEFVNTPPLVKLWYQLETEPIVGAETFYVDGAANRETKQGKAGYVTDKGRQKVISITETTNQKTELQAIHLALQDSGSEVNIVTDSQYALGIIQAQPDKSESELVNQIIEQLIKKDRVYLSWVPAHKGIGGNEQVDKLVSSGIRKVLFLDGIDKAQEEHEKYHNNWRAMASDFNLPPVVAKEIVASCDKCQLKGEAIHGQVDCSPGIWQLDCTHLEGKIILVAVHVASGYIEAEVIPAETGQETAYFILKLAGRWPVRVIHTDNGSNFTSAVVKAACWWADIKQEFGIPYNPQSQGVVESMNKELKKIIGQVREQAEHLKTAVQMAVFIHNFKRKGGIGGYSAGERIIDIIATDIQTKELQKQITKIQNFRVYYRDSREPIWKGPAKLLWKGEGAVVIQNSEIKVVPRRKAKIIRDYGKQMAGDDCVAGRQDED</sequence>
<feature type="initiator methionine" description="Removed; by host" evidence="1">
    <location>
        <position position="1"/>
    </location>
</feature>
<feature type="chain" id="PRO_5000065651" description="Gag-Pol polyprotein">
    <location>
        <begin position="2"/>
        <end position="1429"/>
    </location>
</feature>
<feature type="chain" id="PRO_0000325017" description="Matrix protein p17" evidence="1">
    <location>
        <begin position="2"/>
        <end position="128"/>
    </location>
</feature>
<feature type="chain" id="PRO_0000325018" description="Capsid protein p24" evidence="1">
    <location>
        <begin position="129"/>
        <end position="359"/>
    </location>
</feature>
<feature type="peptide" id="PRO_0000325019" description="Spacer peptide 1" evidence="1">
    <location>
        <begin position="360"/>
        <end position="372"/>
    </location>
</feature>
<feature type="chain" id="PRO_0000325020" description="Nucleocapsid protein p7" evidence="1">
    <location>
        <begin position="373"/>
        <end position="427"/>
    </location>
</feature>
<feature type="peptide" id="PRO_0000325021" description="Transframe peptide" evidence="8">
    <location>
        <begin position="428"/>
        <end position="435"/>
    </location>
</feature>
<feature type="chain" id="PRO_0000325022" description="p6-pol" evidence="8">
    <location>
        <begin position="436"/>
        <end position="483"/>
    </location>
</feature>
<feature type="chain" id="PRO_0000325023" description="Protease" evidence="1">
    <location>
        <begin position="484"/>
        <end position="582"/>
    </location>
</feature>
<feature type="chain" id="PRO_0000325024" description="Reverse transcriptase/ribonuclease H" evidence="1">
    <location>
        <begin position="583"/>
        <end position="1142"/>
    </location>
</feature>
<feature type="chain" id="PRO_0000325025" description="p51 RT" evidence="1">
    <location>
        <begin position="583"/>
        <end position="1022"/>
    </location>
</feature>
<feature type="chain" id="PRO_0000325026" description="p15" evidence="1">
    <location>
        <begin position="1023"/>
        <end position="1142"/>
    </location>
</feature>
<feature type="chain" id="PRO_0000325027" description="Integrase" evidence="1">
    <location>
        <begin position="1143"/>
        <end position="1429"/>
    </location>
</feature>
<feature type="domain" description="Peptidase A2" evidence="10">
    <location>
        <begin position="503"/>
        <end position="572"/>
    </location>
</feature>
<feature type="domain" description="Reverse transcriptase" evidence="11">
    <location>
        <begin position="626"/>
        <end position="816"/>
    </location>
</feature>
<feature type="domain" description="RNase H type-1" evidence="12">
    <location>
        <begin position="1016"/>
        <end position="1139"/>
    </location>
</feature>
<feature type="domain" description="Integrase catalytic" evidence="14">
    <location>
        <begin position="1196"/>
        <end position="1346"/>
    </location>
</feature>
<feature type="zinc finger region" description="CCHC-type 1" evidence="9">
    <location>
        <begin position="385"/>
        <end position="402"/>
    </location>
</feature>
<feature type="zinc finger region" description="CCHC-type 2" evidence="9">
    <location>
        <begin position="406"/>
        <end position="423"/>
    </location>
</feature>
<feature type="zinc finger region" description="Integrase-type" evidence="13">
    <location>
        <begin position="1145"/>
        <end position="1186"/>
    </location>
</feature>
<feature type="DNA-binding region" description="Integrase-type" evidence="15">
    <location>
        <begin position="1365"/>
        <end position="1411"/>
    </location>
</feature>
<feature type="region of interest" description="Interaction with Gp41" evidence="7">
    <location>
        <begin position="7"/>
        <end position="31"/>
    </location>
</feature>
<feature type="region of interest" description="Interaction with host CALM1" evidence="5">
    <location>
        <begin position="8"/>
        <end position="43"/>
    </location>
</feature>
<feature type="region of interest" description="Interaction with host AP3D1" evidence="7">
    <location>
        <begin position="12"/>
        <end position="19"/>
    </location>
</feature>
<feature type="region of interest" description="Interaction with membrane phosphatidylinositol 4,5-bisphosphate and RNA" evidence="7">
    <location>
        <begin position="14"/>
        <end position="33"/>
    </location>
</feature>
<feature type="region of interest" description="Interaction with membrane phosphatidylinositol 4,5-bisphosphate" evidence="7">
    <location>
        <begin position="73"/>
        <end position="77"/>
    </location>
</feature>
<feature type="region of interest" description="Disordered" evidence="17">
    <location>
        <begin position="105"/>
        <end position="124"/>
    </location>
</feature>
<feature type="region of interest" description="Interaction with human PPIA/CYPA and NUP153" evidence="7">
    <location>
        <begin position="185"/>
        <end position="223"/>
    </location>
</feature>
<feature type="region of interest" description="Dimerization/Multimerization of capsid protein p24" evidence="5">
    <location>
        <begin position="273"/>
        <end position="359"/>
    </location>
</feature>
<feature type="region of interest" description="Disordered" evidence="17">
    <location>
        <begin position="439"/>
        <end position="479"/>
    </location>
</feature>
<feature type="region of interest" description="Dimerization of protease" evidence="5">
    <location>
        <begin position="484"/>
        <end position="488"/>
    </location>
</feature>
<feature type="region of interest" description="Dimerization of protease" evidence="5">
    <location>
        <begin position="532"/>
        <end position="538"/>
    </location>
</feature>
<feature type="region of interest" description="Dimerization of protease" evidence="5">
    <location>
        <begin position="571"/>
        <end position="583"/>
    </location>
</feature>
<feature type="region of interest" description="RT 'primer grip'" evidence="1">
    <location>
        <begin position="809"/>
        <end position="817"/>
    </location>
</feature>
<feature type="short sequence motif" description="Nuclear export signal" evidence="1">
    <location>
        <begin position="16"/>
        <end position="22"/>
    </location>
</feature>
<feature type="short sequence motif" description="Nuclear localization signal" evidence="1">
    <location>
        <begin position="26"/>
        <end position="32"/>
    </location>
</feature>
<feature type="short sequence motif" description="Tryptophan repeat motif" evidence="1">
    <location>
        <begin position="980"/>
        <end position="996"/>
    </location>
</feature>
<feature type="compositionally biased region" description="Polar residues" evidence="17">
    <location>
        <begin position="110"/>
        <end position="124"/>
    </location>
</feature>
<feature type="compositionally biased region" description="Polar residues" evidence="17">
    <location>
        <begin position="445"/>
        <end position="455"/>
    </location>
</feature>
<feature type="compositionally biased region" description="Polar residues" evidence="17">
    <location>
        <begin position="467"/>
        <end position="479"/>
    </location>
</feature>
<feature type="active site" description="For protease activity; shared with dimeric partner" evidence="16">
    <location>
        <position position="508"/>
    </location>
</feature>
<feature type="binding site" evidence="1">
    <location>
        <position position="692"/>
    </location>
    <ligand>
        <name>Mg(2+)</name>
        <dbReference type="ChEBI" id="CHEBI:18420"/>
        <label>1</label>
        <note>catalytic; for reverse transcriptase activity</note>
    </ligand>
</feature>
<feature type="binding site" evidence="1">
    <location>
        <position position="767"/>
    </location>
    <ligand>
        <name>Mg(2+)</name>
        <dbReference type="ChEBI" id="CHEBI:18420"/>
        <label>1</label>
        <note>catalytic; for reverse transcriptase activity</note>
    </ligand>
</feature>
<feature type="binding site" evidence="1">
    <location>
        <position position="768"/>
    </location>
    <ligand>
        <name>Mg(2+)</name>
        <dbReference type="ChEBI" id="CHEBI:18420"/>
        <label>1</label>
        <note>catalytic; for reverse transcriptase activity</note>
    </ligand>
</feature>
<feature type="binding site" evidence="1">
    <location>
        <position position="1025"/>
    </location>
    <ligand>
        <name>Mg(2+)</name>
        <dbReference type="ChEBI" id="CHEBI:18420"/>
        <label>2</label>
        <note>catalytic; for RNase H activity</note>
    </ligand>
</feature>
<feature type="binding site" evidence="1">
    <location>
        <position position="1060"/>
    </location>
    <ligand>
        <name>Mg(2+)</name>
        <dbReference type="ChEBI" id="CHEBI:18420"/>
        <label>2</label>
        <note>catalytic; for RNase H activity</note>
    </ligand>
</feature>
<feature type="binding site" evidence="1">
    <location>
        <position position="1080"/>
    </location>
    <ligand>
        <name>Mg(2+)</name>
        <dbReference type="ChEBI" id="CHEBI:18420"/>
        <label>2</label>
        <note>catalytic; for RNase H activity</note>
    </ligand>
</feature>
<feature type="binding site" evidence="1">
    <location>
        <position position="1131"/>
    </location>
    <ligand>
        <name>Mg(2+)</name>
        <dbReference type="ChEBI" id="CHEBI:18420"/>
        <label>2</label>
        <note>catalytic; for RNase H activity</note>
    </ligand>
</feature>
<feature type="binding site" evidence="13">
    <location>
        <position position="1154"/>
    </location>
    <ligand>
        <name>Zn(2+)</name>
        <dbReference type="ChEBI" id="CHEBI:29105"/>
    </ligand>
</feature>
<feature type="binding site" evidence="13">
    <location>
        <position position="1158"/>
    </location>
    <ligand>
        <name>Zn(2+)</name>
        <dbReference type="ChEBI" id="CHEBI:29105"/>
    </ligand>
</feature>
<feature type="binding site" evidence="13">
    <location>
        <position position="1182"/>
    </location>
    <ligand>
        <name>Zn(2+)</name>
        <dbReference type="ChEBI" id="CHEBI:29105"/>
    </ligand>
</feature>
<feature type="binding site" evidence="13">
    <location>
        <position position="1185"/>
    </location>
    <ligand>
        <name>Zn(2+)</name>
        <dbReference type="ChEBI" id="CHEBI:29105"/>
    </ligand>
</feature>
<feature type="binding site" evidence="1">
    <location>
        <position position="1206"/>
    </location>
    <ligand>
        <name>Mg(2+)</name>
        <dbReference type="ChEBI" id="CHEBI:18420"/>
        <label>3</label>
        <note>catalytic; for integrase activity</note>
    </ligand>
</feature>
<feature type="binding site" evidence="1">
    <location>
        <position position="1258"/>
    </location>
    <ligand>
        <name>Mg(2+)</name>
        <dbReference type="ChEBI" id="CHEBI:18420"/>
        <label>3</label>
        <note>catalytic; for integrase activity</note>
    </ligand>
</feature>
<feature type="binding site" evidence="5">
    <location>
        <position position="1294"/>
    </location>
    <ligand>
        <name>Mg(2+)</name>
        <dbReference type="ChEBI" id="CHEBI:18420"/>
        <label>3</label>
        <note>catalytic; for integrase activity</note>
    </ligand>
</feature>
<feature type="site" description="Cleavage; by viral protease" evidence="1">
    <location>
        <begin position="128"/>
        <end position="129"/>
    </location>
</feature>
<feature type="site" description="Cis/trans isomerization of proline peptide bond; by human PPIA/CYPA" evidence="1">
    <location>
        <begin position="217"/>
        <end position="218"/>
    </location>
</feature>
<feature type="site" description="Cleavage; by viral protease" evidence="1">
    <location>
        <begin position="359"/>
        <end position="360"/>
    </location>
</feature>
<feature type="site" description="Cleavage; by viral protease" evidence="1">
    <location>
        <begin position="372"/>
        <end position="373"/>
    </location>
</feature>
<feature type="site" description="Cleavage; by viral protease" evidence="1">
    <location>
        <begin position="427"/>
        <end position="428"/>
    </location>
</feature>
<feature type="site" description="Cleavage; by viral protease" evidence="8">
    <location>
        <begin position="435"/>
        <end position="436"/>
    </location>
</feature>
<feature type="site" description="Cleavage; by viral protease" evidence="1">
    <location>
        <begin position="483"/>
        <end position="484"/>
    </location>
</feature>
<feature type="site" description="Cleavage; by viral protease" evidence="1">
    <location>
        <begin position="582"/>
        <end position="583"/>
    </location>
</feature>
<feature type="site" description="Essential for RT p66/p51 heterodimerization" evidence="1">
    <location>
        <position position="983"/>
    </location>
</feature>
<feature type="site" description="Essential for RT p66/p51 heterodimerization" evidence="1">
    <location>
        <position position="996"/>
    </location>
</feature>
<feature type="site" description="Cleavage; by viral protease; partial" evidence="8">
    <location>
        <begin position="1022"/>
        <end position="1023"/>
    </location>
</feature>
<feature type="site" description="Cleavage; by viral protease" evidence="1">
    <location>
        <begin position="1142"/>
        <end position="1143"/>
    </location>
</feature>
<feature type="modified residue" description="Phosphotyrosine; by host" evidence="1">
    <location>
        <position position="128"/>
    </location>
</feature>
<feature type="lipid moiety-binding region" description="N-myristoyl glycine; by host" evidence="1">
    <location>
        <position position="2"/>
    </location>
</feature>
<protein>
    <recommendedName>
        <fullName>Gag-Pol polyprotein</fullName>
    </recommendedName>
    <alternativeName>
        <fullName>Pr160Gag-Pol</fullName>
    </alternativeName>
    <component>
        <recommendedName>
            <fullName>Matrix protein p17</fullName>
            <shortName>MA</shortName>
        </recommendedName>
    </component>
    <component>
        <recommendedName>
            <fullName>Capsid protein p24</fullName>
            <shortName>CA</shortName>
        </recommendedName>
    </component>
    <component>
        <recommendedName>
            <fullName evidence="7">Spacer peptide 1</fullName>
            <shortName>SP1</shortName>
        </recommendedName>
        <alternativeName>
            <fullName>p2</fullName>
        </alternativeName>
    </component>
    <component>
        <recommendedName>
            <fullName>Nucleocapsid protein p7</fullName>
            <shortName>NC</shortName>
        </recommendedName>
    </component>
    <component>
        <recommendedName>
            <fullName>Transframe peptide</fullName>
            <shortName>TF</shortName>
        </recommendedName>
    </component>
    <component>
        <recommendedName>
            <fullName>p6-pol</fullName>
            <shortName>p6*</shortName>
        </recommendedName>
    </component>
    <component>
        <recommendedName>
            <fullName>Protease</fullName>
            <ecNumber>3.4.23.16</ecNumber>
        </recommendedName>
        <alternativeName>
            <fullName>PR</fullName>
        </alternativeName>
        <alternativeName>
            <fullName>Retropepsin</fullName>
        </alternativeName>
    </component>
    <component>
        <recommendedName>
            <fullName>Reverse transcriptase/ribonuclease H</fullName>
            <ecNumber>2.7.7.49</ecNumber>
            <ecNumber>2.7.7.7</ecNumber>
            <ecNumber>3.1.26.13</ecNumber>
        </recommendedName>
        <alternativeName>
            <fullName>Exoribonuclease H</fullName>
            <ecNumber>3.1.13.2</ecNumber>
        </alternativeName>
        <alternativeName>
            <fullName>p66 RT</fullName>
        </alternativeName>
    </component>
    <component>
        <recommendedName>
            <fullName>p51 RT</fullName>
        </recommendedName>
    </component>
    <component>
        <recommendedName>
            <fullName>p15</fullName>
        </recommendedName>
    </component>
    <component>
        <recommendedName>
            <fullName>Integrase</fullName>
            <shortName>IN</shortName>
            <ecNumber evidence="5">2.7.7.-</ecNumber>
            <ecNumber evidence="5">3.1.-.-</ecNumber>
        </recommendedName>
    </component>
</protein>
<accession>Q9QBZ9</accession>
<name>POL_HV197</name>
<gene>
    <name type="primary">gag-pol</name>
</gene>
<reference key="1">
    <citation type="journal article" date="2000" name="AIDS Res. Hum. Retroviruses">
        <title>Near-full-length genome sequencing of divergent African HIV type 1 subtype F viruses leads to the identification of a new HIV type 1 subtype designated K.</title>
        <authorList>
            <person name="Triques K."/>
            <person name="Bourgeois A."/>
            <person name="Vidale N."/>
            <person name="Mpoudi-Ngole E."/>
            <person name="Mulanga-Kabeya C."/>
            <person name="Nzilambi N."/>
            <person name="Torimiro N."/>
            <person name="Saman E."/>
            <person name="Delaporte E."/>
            <person name="Peeters M."/>
        </authorList>
    </citation>
    <scope>NUCLEOTIDE SEQUENCE [GENOMIC RNA]</scope>
</reference>
<proteinExistence type="inferred from homology"/>
<evidence type="ECO:0000250" key="1"/>
<evidence type="ECO:0000250" key="2">
    <source>
        <dbReference type="UniProtKB" id="P03347"/>
    </source>
</evidence>
<evidence type="ECO:0000250" key="3">
    <source>
        <dbReference type="UniProtKB" id="P03366"/>
    </source>
</evidence>
<evidence type="ECO:0000250" key="4">
    <source>
        <dbReference type="UniProtKB" id="P03367"/>
    </source>
</evidence>
<evidence type="ECO:0000250" key="5">
    <source>
        <dbReference type="UniProtKB" id="P04585"/>
    </source>
</evidence>
<evidence type="ECO:0000250" key="6">
    <source>
        <dbReference type="UniProtKB" id="P12493"/>
    </source>
</evidence>
<evidence type="ECO:0000250" key="7">
    <source>
        <dbReference type="UniProtKB" id="P12497"/>
    </source>
</evidence>
<evidence type="ECO:0000255" key="8"/>
<evidence type="ECO:0000255" key="9">
    <source>
        <dbReference type="PROSITE-ProRule" id="PRU00047"/>
    </source>
</evidence>
<evidence type="ECO:0000255" key="10">
    <source>
        <dbReference type="PROSITE-ProRule" id="PRU00275"/>
    </source>
</evidence>
<evidence type="ECO:0000255" key="11">
    <source>
        <dbReference type="PROSITE-ProRule" id="PRU00405"/>
    </source>
</evidence>
<evidence type="ECO:0000255" key="12">
    <source>
        <dbReference type="PROSITE-ProRule" id="PRU00408"/>
    </source>
</evidence>
<evidence type="ECO:0000255" key="13">
    <source>
        <dbReference type="PROSITE-ProRule" id="PRU00450"/>
    </source>
</evidence>
<evidence type="ECO:0000255" key="14">
    <source>
        <dbReference type="PROSITE-ProRule" id="PRU00457"/>
    </source>
</evidence>
<evidence type="ECO:0000255" key="15">
    <source>
        <dbReference type="PROSITE-ProRule" id="PRU00506"/>
    </source>
</evidence>
<evidence type="ECO:0000255" key="16">
    <source>
        <dbReference type="PROSITE-ProRule" id="PRU10094"/>
    </source>
</evidence>
<evidence type="ECO:0000256" key="17">
    <source>
        <dbReference type="SAM" id="MobiDB-lite"/>
    </source>
</evidence>
<evidence type="ECO:0000305" key="18"/>
<dbReference type="EC" id="3.4.23.16"/>
<dbReference type="EC" id="2.7.7.49"/>
<dbReference type="EC" id="2.7.7.7"/>
<dbReference type="EC" id="3.1.26.13"/>
<dbReference type="EC" id="3.1.13.2"/>
<dbReference type="EC" id="2.7.7.-" evidence="5"/>
<dbReference type="EC" id="3.1.-.-" evidence="5"/>
<dbReference type="EMBL" id="AJ249235">
    <property type="protein sequence ID" value="CAB59007.1"/>
    <property type="status" value="ALT_FRAME"/>
    <property type="molecule type" value="Genomic_RNA"/>
</dbReference>
<dbReference type="EMBL" id="AJ249235">
    <property type="protein sequence ID" value="CAB59008.1"/>
    <property type="status" value="ALT_FRAME"/>
    <property type="molecule type" value="Genomic_RNA"/>
</dbReference>
<dbReference type="SMR" id="Q9QBZ9"/>
<dbReference type="MEROPS" id="A02.001"/>
<dbReference type="PRO" id="PR:Q9QBZ9"/>
<dbReference type="Proteomes" id="UP000100183">
    <property type="component" value="Segment"/>
</dbReference>
<dbReference type="GO" id="GO:0043657">
    <property type="term" value="C:host cell"/>
    <property type="evidence" value="ECO:0007669"/>
    <property type="project" value="GOC"/>
</dbReference>
<dbReference type="GO" id="GO:0042025">
    <property type="term" value="C:host cell nucleus"/>
    <property type="evidence" value="ECO:0007669"/>
    <property type="project" value="UniProtKB-SubCell"/>
</dbReference>
<dbReference type="GO" id="GO:0020002">
    <property type="term" value="C:host cell plasma membrane"/>
    <property type="evidence" value="ECO:0007669"/>
    <property type="project" value="UniProtKB-SubCell"/>
</dbReference>
<dbReference type="GO" id="GO:0072494">
    <property type="term" value="C:host multivesicular body"/>
    <property type="evidence" value="ECO:0007669"/>
    <property type="project" value="UniProtKB-SubCell"/>
</dbReference>
<dbReference type="GO" id="GO:0016020">
    <property type="term" value="C:membrane"/>
    <property type="evidence" value="ECO:0007669"/>
    <property type="project" value="UniProtKB-KW"/>
</dbReference>
<dbReference type="GO" id="GO:0019013">
    <property type="term" value="C:viral nucleocapsid"/>
    <property type="evidence" value="ECO:0007669"/>
    <property type="project" value="UniProtKB-KW"/>
</dbReference>
<dbReference type="GO" id="GO:0055036">
    <property type="term" value="C:virion membrane"/>
    <property type="evidence" value="ECO:0007669"/>
    <property type="project" value="UniProtKB-SubCell"/>
</dbReference>
<dbReference type="GO" id="GO:0004190">
    <property type="term" value="F:aspartic-type endopeptidase activity"/>
    <property type="evidence" value="ECO:0007669"/>
    <property type="project" value="UniProtKB-KW"/>
</dbReference>
<dbReference type="GO" id="GO:0003677">
    <property type="term" value="F:DNA binding"/>
    <property type="evidence" value="ECO:0007669"/>
    <property type="project" value="UniProtKB-KW"/>
</dbReference>
<dbReference type="GO" id="GO:0003887">
    <property type="term" value="F:DNA-directed DNA polymerase activity"/>
    <property type="evidence" value="ECO:0007669"/>
    <property type="project" value="UniProtKB-KW"/>
</dbReference>
<dbReference type="GO" id="GO:0004533">
    <property type="term" value="F:exoribonuclease H activity"/>
    <property type="evidence" value="ECO:0007669"/>
    <property type="project" value="UniProtKB-EC"/>
</dbReference>
<dbReference type="GO" id="GO:0008289">
    <property type="term" value="F:lipid binding"/>
    <property type="evidence" value="ECO:0007669"/>
    <property type="project" value="UniProtKB-KW"/>
</dbReference>
<dbReference type="GO" id="GO:0035613">
    <property type="term" value="F:RNA stem-loop binding"/>
    <property type="evidence" value="ECO:0007669"/>
    <property type="project" value="TreeGrafter"/>
</dbReference>
<dbReference type="GO" id="GO:0003964">
    <property type="term" value="F:RNA-directed DNA polymerase activity"/>
    <property type="evidence" value="ECO:0007669"/>
    <property type="project" value="UniProtKB-KW"/>
</dbReference>
<dbReference type="GO" id="GO:0004523">
    <property type="term" value="F:RNA-DNA hybrid ribonuclease activity"/>
    <property type="evidence" value="ECO:0007669"/>
    <property type="project" value="InterPro"/>
</dbReference>
<dbReference type="GO" id="GO:0005198">
    <property type="term" value="F:structural molecule activity"/>
    <property type="evidence" value="ECO:0007669"/>
    <property type="project" value="InterPro"/>
</dbReference>
<dbReference type="GO" id="GO:0008270">
    <property type="term" value="F:zinc ion binding"/>
    <property type="evidence" value="ECO:0007669"/>
    <property type="project" value="UniProtKB-KW"/>
</dbReference>
<dbReference type="GO" id="GO:0015074">
    <property type="term" value="P:DNA integration"/>
    <property type="evidence" value="ECO:0007669"/>
    <property type="project" value="UniProtKB-KW"/>
</dbReference>
<dbReference type="GO" id="GO:0006310">
    <property type="term" value="P:DNA recombination"/>
    <property type="evidence" value="ECO:0007669"/>
    <property type="project" value="UniProtKB-KW"/>
</dbReference>
<dbReference type="GO" id="GO:0075713">
    <property type="term" value="P:establishment of integrated proviral latency"/>
    <property type="evidence" value="ECO:0007669"/>
    <property type="project" value="UniProtKB-KW"/>
</dbReference>
<dbReference type="GO" id="GO:0006508">
    <property type="term" value="P:proteolysis"/>
    <property type="evidence" value="ECO:0007669"/>
    <property type="project" value="UniProtKB-KW"/>
</dbReference>
<dbReference type="GO" id="GO:0046718">
    <property type="term" value="P:symbiont entry into host cell"/>
    <property type="evidence" value="ECO:0007669"/>
    <property type="project" value="UniProtKB-KW"/>
</dbReference>
<dbReference type="GO" id="GO:0052151">
    <property type="term" value="P:symbiont-mediated activation of host apoptosis"/>
    <property type="evidence" value="ECO:0007669"/>
    <property type="project" value="UniProtKB-KW"/>
</dbReference>
<dbReference type="GO" id="GO:0039657">
    <property type="term" value="P:symbiont-mediated suppression of host gene expression"/>
    <property type="evidence" value="ECO:0007669"/>
    <property type="project" value="UniProtKB-KW"/>
</dbReference>
<dbReference type="GO" id="GO:0044826">
    <property type="term" value="P:viral genome integration into host DNA"/>
    <property type="evidence" value="ECO:0007669"/>
    <property type="project" value="UniProtKB-KW"/>
</dbReference>
<dbReference type="GO" id="GO:0075732">
    <property type="term" value="P:viral penetration into host nucleus"/>
    <property type="evidence" value="ECO:0007669"/>
    <property type="project" value="UniProtKB-KW"/>
</dbReference>
<dbReference type="GO" id="GO:0075523">
    <property type="term" value="P:viral translational frameshifting"/>
    <property type="evidence" value="ECO:0007669"/>
    <property type="project" value="UniProtKB-KW"/>
</dbReference>
<dbReference type="CDD" id="cd05482">
    <property type="entry name" value="HIV_retropepsin_like"/>
    <property type="match status" value="1"/>
</dbReference>
<dbReference type="FunFam" id="1.10.1200.30:FF:000001">
    <property type="entry name" value="Gag polyprotein"/>
    <property type="match status" value="1"/>
</dbReference>
<dbReference type="FunFam" id="1.10.375.10:FF:000001">
    <property type="entry name" value="Gag polyprotein"/>
    <property type="match status" value="1"/>
</dbReference>
<dbReference type="FunFam" id="4.10.60.10:FF:000001">
    <property type="entry name" value="Gag polyprotein"/>
    <property type="match status" value="1"/>
</dbReference>
<dbReference type="FunFam" id="2.40.70.10:FF:000001">
    <property type="entry name" value="Gag-Pol polyprotein"/>
    <property type="match status" value="1"/>
</dbReference>
<dbReference type="FunFam" id="3.30.420.10:FF:000025">
    <property type="entry name" value="Gag-Pol polyprotein"/>
    <property type="match status" value="1"/>
</dbReference>
<dbReference type="FunFam" id="3.30.420.10:FF:000017">
    <property type="entry name" value="POL polyprotein"/>
    <property type="match status" value="1"/>
</dbReference>
<dbReference type="FunFam" id="3.30.70.270:FF:000016">
    <property type="entry name" value="POL polyprotein"/>
    <property type="match status" value="1"/>
</dbReference>
<dbReference type="Gene3D" id="1.10.10.200">
    <property type="match status" value="1"/>
</dbReference>
<dbReference type="Gene3D" id="1.10.1200.30">
    <property type="match status" value="1"/>
</dbReference>
<dbReference type="Gene3D" id="3.30.70.270">
    <property type="match status" value="3"/>
</dbReference>
<dbReference type="Gene3D" id="2.40.70.10">
    <property type="entry name" value="Acid Proteases"/>
    <property type="match status" value="1"/>
</dbReference>
<dbReference type="Gene3D" id="3.10.10.10">
    <property type="entry name" value="HIV Type 1 Reverse Transcriptase, subunit A, domain 1"/>
    <property type="match status" value="1"/>
</dbReference>
<dbReference type="Gene3D" id="1.10.375.10">
    <property type="entry name" value="Human Immunodeficiency Virus Type 1 Capsid Protein"/>
    <property type="match status" value="1"/>
</dbReference>
<dbReference type="Gene3D" id="1.10.150.90">
    <property type="entry name" value="Immunodeficiency lentiviruses, gag gene matrix protein p17"/>
    <property type="match status" value="1"/>
</dbReference>
<dbReference type="Gene3D" id="2.30.30.10">
    <property type="entry name" value="Integrase, C-terminal domain superfamily, retroviral"/>
    <property type="match status" value="1"/>
</dbReference>
<dbReference type="Gene3D" id="3.30.420.10">
    <property type="entry name" value="Ribonuclease H-like superfamily/Ribonuclease H"/>
    <property type="match status" value="2"/>
</dbReference>
<dbReference type="Gene3D" id="1.20.5.760">
    <property type="entry name" value="Single helix bin"/>
    <property type="match status" value="1"/>
</dbReference>
<dbReference type="Gene3D" id="4.10.60.10">
    <property type="entry name" value="Zinc finger, CCHC-type"/>
    <property type="match status" value="1"/>
</dbReference>
<dbReference type="InterPro" id="IPR001969">
    <property type="entry name" value="Aspartic_peptidase_AS"/>
</dbReference>
<dbReference type="InterPro" id="IPR043502">
    <property type="entry name" value="DNA/RNA_pol_sf"/>
</dbReference>
<dbReference type="InterPro" id="IPR045345">
    <property type="entry name" value="Gag_p24_C"/>
</dbReference>
<dbReference type="InterPro" id="IPR017856">
    <property type="entry name" value="Integrase-like_N"/>
</dbReference>
<dbReference type="InterPro" id="IPR036862">
    <property type="entry name" value="Integrase_C_dom_sf_retrovir"/>
</dbReference>
<dbReference type="InterPro" id="IPR001037">
    <property type="entry name" value="Integrase_C_retrovir"/>
</dbReference>
<dbReference type="InterPro" id="IPR001584">
    <property type="entry name" value="Integrase_cat-core"/>
</dbReference>
<dbReference type="InterPro" id="IPR003308">
    <property type="entry name" value="Integrase_Zn-bd_dom_N"/>
</dbReference>
<dbReference type="InterPro" id="IPR000071">
    <property type="entry name" value="Lentvrl_matrix_N"/>
</dbReference>
<dbReference type="InterPro" id="IPR012344">
    <property type="entry name" value="Matrix_HIV/RSV_N"/>
</dbReference>
<dbReference type="InterPro" id="IPR001995">
    <property type="entry name" value="Peptidase_A2_cat"/>
</dbReference>
<dbReference type="InterPro" id="IPR021109">
    <property type="entry name" value="Peptidase_aspartic_dom_sf"/>
</dbReference>
<dbReference type="InterPro" id="IPR034170">
    <property type="entry name" value="Retropepsin-like_cat_dom"/>
</dbReference>
<dbReference type="InterPro" id="IPR018061">
    <property type="entry name" value="Retropepsins"/>
</dbReference>
<dbReference type="InterPro" id="IPR008916">
    <property type="entry name" value="Retrov_capsid_C"/>
</dbReference>
<dbReference type="InterPro" id="IPR008919">
    <property type="entry name" value="Retrov_capsid_N"/>
</dbReference>
<dbReference type="InterPro" id="IPR010999">
    <property type="entry name" value="Retrovr_matrix"/>
</dbReference>
<dbReference type="InterPro" id="IPR043128">
    <property type="entry name" value="Rev_trsase/Diguanyl_cyclase"/>
</dbReference>
<dbReference type="InterPro" id="IPR012337">
    <property type="entry name" value="RNaseH-like_sf"/>
</dbReference>
<dbReference type="InterPro" id="IPR002156">
    <property type="entry name" value="RNaseH_domain"/>
</dbReference>
<dbReference type="InterPro" id="IPR036397">
    <property type="entry name" value="RNaseH_sf"/>
</dbReference>
<dbReference type="InterPro" id="IPR000477">
    <property type="entry name" value="RT_dom"/>
</dbReference>
<dbReference type="InterPro" id="IPR010659">
    <property type="entry name" value="RVT_connect"/>
</dbReference>
<dbReference type="InterPro" id="IPR010661">
    <property type="entry name" value="RVT_thumb"/>
</dbReference>
<dbReference type="InterPro" id="IPR001878">
    <property type="entry name" value="Znf_CCHC"/>
</dbReference>
<dbReference type="InterPro" id="IPR036875">
    <property type="entry name" value="Znf_CCHC_sf"/>
</dbReference>
<dbReference type="PANTHER" id="PTHR41694">
    <property type="entry name" value="ENDOGENOUS RETROVIRUS GROUP K MEMBER POL PROTEIN"/>
    <property type="match status" value="1"/>
</dbReference>
<dbReference type="PANTHER" id="PTHR41694:SF3">
    <property type="entry name" value="RNA-DIRECTED DNA POLYMERASE-RELATED"/>
    <property type="match status" value="1"/>
</dbReference>
<dbReference type="Pfam" id="PF00540">
    <property type="entry name" value="Gag_p17"/>
    <property type="match status" value="1"/>
</dbReference>
<dbReference type="Pfam" id="PF19317">
    <property type="entry name" value="Gag_p24_C"/>
    <property type="match status" value="1"/>
</dbReference>
<dbReference type="Pfam" id="PF00552">
    <property type="entry name" value="IN_DBD_C"/>
    <property type="match status" value="1"/>
</dbReference>
<dbReference type="Pfam" id="PF02022">
    <property type="entry name" value="Integrase_Zn"/>
    <property type="match status" value="1"/>
</dbReference>
<dbReference type="Pfam" id="PF00075">
    <property type="entry name" value="RNase_H"/>
    <property type="match status" value="1"/>
</dbReference>
<dbReference type="Pfam" id="PF00665">
    <property type="entry name" value="rve"/>
    <property type="match status" value="1"/>
</dbReference>
<dbReference type="Pfam" id="PF00077">
    <property type="entry name" value="RVP"/>
    <property type="match status" value="1"/>
</dbReference>
<dbReference type="Pfam" id="PF00078">
    <property type="entry name" value="RVT_1"/>
    <property type="match status" value="1"/>
</dbReference>
<dbReference type="Pfam" id="PF06815">
    <property type="entry name" value="RVT_connect"/>
    <property type="match status" value="1"/>
</dbReference>
<dbReference type="Pfam" id="PF06817">
    <property type="entry name" value="RVT_thumb"/>
    <property type="match status" value="1"/>
</dbReference>
<dbReference type="Pfam" id="PF00098">
    <property type="entry name" value="zf-CCHC"/>
    <property type="match status" value="2"/>
</dbReference>
<dbReference type="PRINTS" id="PR00234">
    <property type="entry name" value="HIV1MATRIX"/>
</dbReference>
<dbReference type="SMART" id="SM00343">
    <property type="entry name" value="ZnF_C2HC"/>
    <property type="match status" value="2"/>
</dbReference>
<dbReference type="SUPFAM" id="SSF50630">
    <property type="entry name" value="Acid proteases"/>
    <property type="match status" value="1"/>
</dbReference>
<dbReference type="SUPFAM" id="SSF50122">
    <property type="entry name" value="DNA-binding domain of retroviral integrase"/>
    <property type="match status" value="1"/>
</dbReference>
<dbReference type="SUPFAM" id="SSF56672">
    <property type="entry name" value="DNA/RNA polymerases"/>
    <property type="match status" value="1"/>
</dbReference>
<dbReference type="SUPFAM" id="SSF46919">
    <property type="entry name" value="N-terminal Zn binding domain of HIV integrase"/>
    <property type="match status" value="1"/>
</dbReference>
<dbReference type="SUPFAM" id="SSF47836">
    <property type="entry name" value="Retroviral matrix proteins"/>
    <property type="match status" value="1"/>
</dbReference>
<dbReference type="SUPFAM" id="SSF47353">
    <property type="entry name" value="Retrovirus capsid dimerization domain-like"/>
    <property type="match status" value="1"/>
</dbReference>
<dbReference type="SUPFAM" id="SSF47943">
    <property type="entry name" value="Retrovirus capsid protein, N-terminal core domain"/>
    <property type="match status" value="1"/>
</dbReference>
<dbReference type="SUPFAM" id="SSF57756">
    <property type="entry name" value="Retrovirus zinc finger-like domains"/>
    <property type="match status" value="1"/>
</dbReference>
<dbReference type="SUPFAM" id="SSF53098">
    <property type="entry name" value="Ribonuclease H-like"/>
    <property type="match status" value="2"/>
</dbReference>
<dbReference type="PROSITE" id="PS50175">
    <property type="entry name" value="ASP_PROT_RETROV"/>
    <property type="match status" value="1"/>
</dbReference>
<dbReference type="PROSITE" id="PS00141">
    <property type="entry name" value="ASP_PROTEASE"/>
    <property type="match status" value="1"/>
</dbReference>
<dbReference type="PROSITE" id="PS50994">
    <property type="entry name" value="INTEGRASE"/>
    <property type="match status" value="1"/>
</dbReference>
<dbReference type="PROSITE" id="PS51027">
    <property type="entry name" value="INTEGRASE_DBD"/>
    <property type="match status" value="1"/>
</dbReference>
<dbReference type="PROSITE" id="PS50879">
    <property type="entry name" value="RNASE_H_1"/>
    <property type="match status" value="1"/>
</dbReference>
<dbReference type="PROSITE" id="PS50878">
    <property type="entry name" value="RT_POL"/>
    <property type="match status" value="1"/>
</dbReference>
<dbReference type="PROSITE" id="PS50158">
    <property type="entry name" value="ZF_CCHC"/>
    <property type="match status" value="2"/>
</dbReference>
<dbReference type="PROSITE" id="PS50876">
    <property type="entry name" value="ZF_INTEGRASE"/>
    <property type="match status" value="1"/>
</dbReference>